<organism>
    <name type="scientific">Pelodictyon phaeoclathratiforme (strain DSM 5477 / BU-1)</name>
    <dbReference type="NCBI Taxonomy" id="324925"/>
    <lineage>
        <taxon>Bacteria</taxon>
        <taxon>Pseudomonadati</taxon>
        <taxon>Chlorobiota</taxon>
        <taxon>Chlorobiia</taxon>
        <taxon>Chlorobiales</taxon>
        <taxon>Chlorobiaceae</taxon>
        <taxon>Chlorobium/Pelodictyon group</taxon>
        <taxon>Pelodictyon</taxon>
    </lineage>
</organism>
<sequence length="151" mass="16496">MKVILRNNVATLGDAGEVVAVKNGYANNFLIPQGMAIRATEGTLKALETEKKQQTKKIELQRKHAREHAQTIEQMSLKVYAKAGDSGKLFGTVTSADIADALKAQGIDIDRRKITIEAPIKSLGKYEADAKIFQDITVKVHFEVEAEGSEA</sequence>
<comment type="function">
    <text evidence="1">Binds to the 23S rRNA.</text>
</comment>
<comment type="similarity">
    <text evidence="1">Belongs to the bacterial ribosomal protein bL9 family.</text>
</comment>
<evidence type="ECO:0000255" key="1">
    <source>
        <dbReference type="HAMAP-Rule" id="MF_00503"/>
    </source>
</evidence>
<evidence type="ECO:0000305" key="2"/>
<proteinExistence type="inferred from homology"/>
<name>RL9_PELPB</name>
<keyword id="KW-1185">Reference proteome</keyword>
<keyword id="KW-0687">Ribonucleoprotein</keyword>
<keyword id="KW-0689">Ribosomal protein</keyword>
<keyword id="KW-0694">RNA-binding</keyword>
<keyword id="KW-0699">rRNA-binding</keyword>
<gene>
    <name evidence="1" type="primary">rplI</name>
    <name type="ordered locus">Ppha_0110</name>
</gene>
<accession>B4SB45</accession>
<feature type="chain" id="PRO_1000126949" description="Large ribosomal subunit protein bL9">
    <location>
        <begin position="1"/>
        <end position="151"/>
    </location>
</feature>
<dbReference type="EMBL" id="CP001110">
    <property type="protein sequence ID" value="ACF42466.1"/>
    <property type="molecule type" value="Genomic_DNA"/>
</dbReference>
<dbReference type="RefSeq" id="WP_012506964.1">
    <property type="nucleotide sequence ID" value="NC_011060.1"/>
</dbReference>
<dbReference type="SMR" id="B4SB45"/>
<dbReference type="STRING" id="324925.Ppha_0110"/>
<dbReference type="KEGG" id="pph:Ppha_0110"/>
<dbReference type="eggNOG" id="COG0359">
    <property type="taxonomic scope" value="Bacteria"/>
</dbReference>
<dbReference type="HOGENOM" id="CLU_078938_3_0_10"/>
<dbReference type="OrthoDB" id="9788336at2"/>
<dbReference type="Proteomes" id="UP000002724">
    <property type="component" value="Chromosome"/>
</dbReference>
<dbReference type="GO" id="GO:1990904">
    <property type="term" value="C:ribonucleoprotein complex"/>
    <property type="evidence" value="ECO:0007669"/>
    <property type="project" value="UniProtKB-KW"/>
</dbReference>
<dbReference type="GO" id="GO:0005840">
    <property type="term" value="C:ribosome"/>
    <property type="evidence" value="ECO:0007669"/>
    <property type="project" value="UniProtKB-KW"/>
</dbReference>
<dbReference type="GO" id="GO:0019843">
    <property type="term" value="F:rRNA binding"/>
    <property type="evidence" value="ECO:0007669"/>
    <property type="project" value="UniProtKB-UniRule"/>
</dbReference>
<dbReference type="GO" id="GO:0003735">
    <property type="term" value="F:structural constituent of ribosome"/>
    <property type="evidence" value="ECO:0007669"/>
    <property type="project" value="InterPro"/>
</dbReference>
<dbReference type="GO" id="GO:0006412">
    <property type="term" value="P:translation"/>
    <property type="evidence" value="ECO:0007669"/>
    <property type="project" value="UniProtKB-UniRule"/>
</dbReference>
<dbReference type="FunFam" id="3.40.5.10:FF:000003">
    <property type="entry name" value="50S ribosomal protein L9"/>
    <property type="match status" value="1"/>
</dbReference>
<dbReference type="Gene3D" id="3.10.430.100">
    <property type="entry name" value="Ribosomal protein L9, C-terminal domain"/>
    <property type="match status" value="1"/>
</dbReference>
<dbReference type="Gene3D" id="3.40.5.10">
    <property type="entry name" value="Ribosomal protein L9, N-terminal domain"/>
    <property type="match status" value="1"/>
</dbReference>
<dbReference type="HAMAP" id="MF_00503">
    <property type="entry name" value="Ribosomal_bL9"/>
    <property type="match status" value="1"/>
</dbReference>
<dbReference type="InterPro" id="IPR000244">
    <property type="entry name" value="Ribosomal_bL9"/>
</dbReference>
<dbReference type="InterPro" id="IPR009027">
    <property type="entry name" value="Ribosomal_bL9/RNase_H1_N"/>
</dbReference>
<dbReference type="InterPro" id="IPR020594">
    <property type="entry name" value="Ribosomal_bL9_bac/chp"/>
</dbReference>
<dbReference type="InterPro" id="IPR020069">
    <property type="entry name" value="Ribosomal_bL9_C"/>
</dbReference>
<dbReference type="InterPro" id="IPR036791">
    <property type="entry name" value="Ribosomal_bL9_C_sf"/>
</dbReference>
<dbReference type="InterPro" id="IPR020070">
    <property type="entry name" value="Ribosomal_bL9_N"/>
</dbReference>
<dbReference type="InterPro" id="IPR036935">
    <property type="entry name" value="Ribosomal_bL9_N_sf"/>
</dbReference>
<dbReference type="NCBIfam" id="TIGR00158">
    <property type="entry name" value="L9"/>
    <property type="match status" value="1"/>
</dbReference>
<dbReference type="PANTHER" id="PTHR21368">
    <property type="entry name" value="50S RIBOSOMAL PROTEIN L9"/>
    <property type="match status" value="1"/>
</dbReference>
<dbReference type="Pfam" id="PF03948">
    <property type="entry name" value="Ribosomal_L9_C"/>
    <property type="match status" value="1"/>
</dbReference>
<dbReference type="Pfam" id="PF01281">
    <property type="entry name" value="Ribosomal_L9_N"/>
    <property type="match status" value="1"/>
</dbReference>
<dbReference type="SUPFAM" id="SSF55658">
    <property type="entry name" value="L9 N-domain-like"/>
    <property type="match status" value="1"/>
</dbReference>
<dbReference type="SUPFAM" id="SSF55653">
    <property type="entry name" value="Ribosomal protein L9 C-domain"/>
    <property type="match status" value="1"/>
</dbReference>
<dbReference type="PROSITE" id="PS00651">
    <property type="entry name" value="RIBOSOMAL_L9"/>
    <property type="match status" value="1"/>
</dbReference>
<protein>
    <recommendedName>
        <fullName evidence="1">Large ribosomal subunit protein bL9</fullName>
    </recommendedName>
    <alternativeName>
        <fullName evidence="2">50S ribosomal protein L9</fullName>
    </alternativeName>
</protein>
<reference key="1">
    <citation type="submission" date="2008-06" db="EMBL/GenBank/DDBJ databases">
        <title>Complete sequence of Pelodictyon phaeoclathratiforme BU-1.</title>
        <authorList>
            <consortium name="US DOE Joint Genome Institute"/>
            <person name="Lucas S."/>
            <person name="Copeland A."/>
            <person name="Lapidus A."/>
            <person name="Glavina del Rio T."/>
            <person name="Dalin E."/>
            <person name="Tice H."/>
            <person name="Bruce D."/>
            <person name="Goodwin L."/>
            <person name="Pitluck S."/>
            <person name="Schmutz J."/>
            <person name="Larimer F."/>
            <person name="Land M."/>
            <person name="Hauser L."/>
            <person name="Kyrpides N."/>
            <person name="Mikhailova N."/>
            <person name="Liu Z."/>
            <person name="Li T."/>
            <person name="Zhao F."/>
            <person name="Overmann J."/>
            <person name="Bryant D.A."/>
            <person name="Richardson P."/>
        </authorList>
    </citation>
    <scope>NUCLEOTIDE SEQUENCE [LARGE SCALE GENOMIC DNA]</scope>
    <source>
        <strain>DSM 5477 / BU-1</strain>
    </source>
</reference>